<gene>
    <name type="primary">eif5b</name>
    <name type="ORF">DDB_G0278815</name>
</gene>
<sequence length="1045" mass="115835">MGPKQRVRKDNYWDSGEADKDREEAEKLHKKGQQQSDSDSDSDDIPISKKKPTSKFAPVDESSSESEESSSEEEVQKKPSKPAAKQSKKVAPTNNKKKPVVESSSSEEEESESESEESSEEDTKKKPSKPAAKQSKKVAPTNNNNNKKKPVVESSSEESESESEESSSEEDTKKKPSKPAAKQNKKAPAKKAAAVESSSESEEESSSSEEEEKPTKPTQNNNNKKNNAKKPPAAKPSAAKQQAKKPAPKKPEEPEVLSGFLLKQRQEEERIAREKEEKRIREEEEKKRAAEQKIIDDEKARLKSIENSKKRAEKKEKQAGAAAEADRMAKLAKLGVNISAVGEKKEKSTNKTKSGGKKQNQVSSITESVEKLKIEEPTSAPKDDVVEVMDSWDNDDYETVEEIQKKKEEEAKRKEEEEEAQRLAAKEEKKKAKAAAAAAAAALIPTTDPTTTFADKSYRSPIICILGHVDTGKTSLLDKIRNTNVQGGEARGITQQIGASFIPVDAIKEQTKSFAEKIKMDFKLPGLLLIDTPGHESFNNLRSRGSGLCDLAILVIDIMHGLQAQTLESINLLRMRKTPFIVALNKVDRIYDWKPCVNTDFKEAYKIQSKSAAQEFDYKVKDIIAALAGQELNAELYWRNKDHRKYVSLVPTSANTGEGISDLMLVVIQLMQKLMLDKVEFTNQLQCTLLEVKVIEGFGTTIDVVLVNGTLNEGDKIVVSGFNGPIETSIRSLLTPPPLRESRVKSQFINHKSIRAAMGIKIVAPGLEKAVPGTSLHVVGPNDDIEKIRAEAKREVDSVLNDVETSGIGVSVQASTLGSLEAFLNFLKKIKIPVANVAIGPVHKKHIMNASIMLDKDPKYAILLAFDVKIEESAIQAANEMKVQVLSDETIYLFEEKLKKHFGAIKEKLRAETASICVWPCILEVTNVFRNSNPILVGVRVKEGTLRIGTPICVPESNCADVGKVIGIKLNEKDVTLAKKDDVVSVAIDDNNTKTTIYRHFDDKKQWMSKITRESLDALKEGWSEDLTKQDIQLLKFMKTVYKIQ</sequence>
<name>IF2P_DICDI</name>
<comment type="function">
    <text evidence="3">Plays a role in translation initiation. Translational GTPase that catalyzes the joining of the 40S and 60S subunits to form the 80S initiation complex with the initiator methionine-tRNA in the P-site base paired to the start codon. GTP binding and hydrolysis induces conformational changes in the enzyme that renders it active for productive interactions with the ribosome. The release of the enzyme after formation of the initiation complex is a prerequisite to form elongation-competent ribosomes.</text>
</comment>
<comment type="catalytic activity">
    <reaction evidence="3">
        <text>GTP + H2O = GDP + phosphate + H(+)</text>
        <dbReference type="Rhea" id="RHEA:19669"/>
        <dbReference type="ChEBI" id="CHEBI:15377"/>
        <dbReference type="ChEBI" id="CHEBI:15378"/>
        <dbReference type="ChEBI" id="CHEBI:37565"/>
        <dbReference type="ChEBI" id="CHEBI:43474"/>
        <dbReference type="ChEBI" id="CHEBI:58189"/>
        <dbReference type="EC" id="3.6.5.3"/>
    </reaction>
</comment>
<comment type="cofactor">
    <cofactor evidence="2">
        <name>a monovalent cation</name>
        <dbReference type="ChEBI" id="CHEBI:60242"/>
    </cofactor>
    <text evidence="2">Binds 1 monovalent cation per monomer in the active site. Structural cofactor that stabilizes the GTP-bound 'on' state. May also act as a transition state stabilizer of the hydrolysis reaction.</text>
</comment>
<comment type="subcellular location">
    <subcellularLocation>
        <location evidence="3">Cytoplasm</location>
    </subcellularLocation>
</comment>
<comment type="similarity">
    <text evidence="6">Belongs to the TRAFAC class translation factor GTPase superfamily. Classic translation factor GTPase family. IF-2 subfamily.</text>
</comment>
<protein>
    <recommendedName>
        <fullName>Eukaryotic translation initiation factor 5B</fullName>
        <shortName>eIF-5B</shortName>
        <ecNumber>3.6.5.3</ecNumber>
    </recommendedName>
    <alternativeName>
        <fullName>Translation initiation factor IF-2</fullName>
    </alternativeName>
</protein>
<keyword id="KW-0963">Cytoplasm</keyword>
<keyword id="KW-0342">GTP-binding</keyword>
<keyword id="KW-0378">Hydrolase</keyword>
<keyword id="KW-0396">Initiation factor</keyword>
<keyword id="KW-0479">Metal-binding</keyword>
<keyword id="KW-0547">Nucleotide-binding</keyword>
<keyword id="KW-0597">Phosphoprotein</keyword>
<keyword id="KW-0648">Protein biosynthesis</keyword>
<keyword id="KW-1185">Reference proteome</keyword>
<reference key="1">
    <citation type="journal article" date="2005" name="Nature">
        <title>The genome of the social amoeba Dictyostelium discoideum.</title>
        <authorList>
            <person name="Eichinger L."/>
            <person name="Pachebat J.A."/>
            <person name="Gloeckner G."/>
            <person name="Rajandream M.A."/>
            <person name="Sucgang R."/>
            <person name="Berriman M."/>
            <person name="Song J."/>
            <person name="Olsen R."/>
            <person name="Szafranski K."/>
            <person name="Xu Q."/>
            <person name="Tunggal B."/>
            <person name="Kummerfeld S."/>
            <person name="Madera M."/>
            <person name="Konfortov B.A."/>
            <person name="Rivero F."/>
            <person name="Bankier A.T."/>
            <person name="Lehmann R."/>
            <person name="Hamlin N."/>
            <person name="Davies R."/>
            <person name="Gaudet P."/>
            <person name="Fey P."/>
            <person name="Pilcher K."/>
            <person name="Chen G."/>
            <person name="Saunders D."/>
            <person name="Sodergren E.J."/>
            <person name="Davis P."/>
            <person name="Kerhornou A."/>
            <person name="Nie X."/>
            <person name="Hall N."/>
            <person name="Anjard C."/>
            <person name="Hemphill L."/>
            <person name="Bason N."/>
            <person name="Farbrother P."/>
            <person name="Desany B."/>
            <person name="Just E."/>
            <person name="Morio T."/>
            <person name="Rost R."/>
            <person name="Churcher C.M."/>
            <person name="Cooper J."/>
            <person name="Haydock S."/>
            <person name="van Driessche N."/>
            <person name="Cronin A."/>
            <person name="Goodhead I."/>
            <person name="Muzny D.M."/>
            <person name="Mourier T."/>
            <person name="Pain A."/>
            <person name="Lu M."/>
            <person name="Harper D."/>
            <person name="Lindsay R."/>
            <person name="Hauser H."/>
            <person name="James K.D."/>
            <person name="Quiles M."/>
            <person name="Madan Babu M."/>
            <person name="Saito T."/>
            <person name="Buchrieser C."/>
            <person name="Wardroper A."/>
            <person name="Felder M."/>
            <person name="Thangavelu M."/>
            <person name="Johnson D."/>
            <person name="Knights A."/>
            <person name="Loulseged H."/>
            <person name="Mungall K.L."/>
            <person name="Oliver K."/>
            <person name="Price C."/>
            <person name="Quail M.A."/>
            <person name="Urushihara H."/>
            <person name="Hernandez J."/>
            <person name="Rabbinowitsch E."/>
            <person name="Steffen D."/>
            <person name="Sanders M."/>
            <person name="Ma J."/>
            <person name="Kohara Y."/>
            <person name="Sharp S."/>
            <person name="Simmonds M.N."/>
            <person name="Spiegler S."/>
            <person name="Tivey A."/>
            <person name="Sugano S."/>
            <person name="White B."/>
            <person name="Walker D."/>
            <person name="Woodward J.R."/>
            <person name="Winckler T."/>
            <person name="Tanaka Y."/>
            <person name="Shaulsky G."/>
            <person name="Schleicher M."/>
            <person name="Weinstock G.M."/>
            <person name="Rosenthal A."/>
            <person name="Cox E.C."/>
            <person name="Chisholm R.L."/>
            <person name="Gibbs R.A."/>
            <person name="Loomis W.F."/>
            <person name="Platzer M."/>
            <person name="Kay R.R."/>
            <person name="Williams J.G."/>
            <person name="Dear P.H."/>
            <person name="Noegel A.A."/>
            <person name="Barrell B.G."/>
            <person name="Kuspa A."/>
        </authorList>
    </citation>
    <scope>NUCLEOTIDE SEQUENCE [LARGE SCALE GENOMIC DNA]</scope>
    <source>
        <strain>AX4</strain>
    </source>
</reference>
<dbReference type="EC" id="3.6.5.3"/>
<dbReference type="EMBL" id="AAFI02000024">
    <property type="protein sequence ID" value="EAL68009.1"/>
    <property type="molecule type" value="Genomic_DNA"/>
</dbReference>
<dbReference type="RefSeq" id="XP_641984.1">
    <property type="nucleotide sequence ID" value="XM_636892.1"/>
</dbReference>
<dbReference type="SMR" id="Q54XP6"/>
<dbReference type="FunCoup" id="Q54XP6">
    <property type="interactions" value="38"/>
</dbReference>
<dbReference type="STRING" id="44689.Q54XP6"/>
<dbReference type="PaxDb" id="44689-DDB0234259"/>
<dbReference type="EnsemblProtists" id="EAL68009">
    <property type="protein sequence ID" value="EAL68009"/>
    <property type="gene ID" value="DDB_G0278815"/>
</dbReference>
<dbReference type="GeneID" id="8621716"/>
<dbReference type="KEGG" id="ddi:DDB_G0278815"/>
<dbReference type="dictyBase" id="DDB_G0278815">
    <property type="gene designation" value="eIF5b"/>
</dbReference>
<dbReference type="VEuPathDB" id="AmoebaDB:DDB_G0278815"/>
<dbReference type="eggNOG" id="KOG1144">
    <property type="taxonomic scope" value="Eukaryota"/>
</dbReference>
<dbReference type="HOGENOM" id="CLU_002656_3_2_1"/>
<dbReference type="InParanoid" id="Q54XP6"/>
<dbReference type="OMA" id="EFAVMLC"/>
<dbReference type="PhylomeDB" id="Q54XP6"/>
<dbReference type="Reactome" id="R-DDI-72706">
    <property type="pathway name" value="GTP hydrolysis and joining of the 60S ribosomal subunit"/>
</dbReference>
<dbReference type="PRO" id="PR:Q54XP6"/>
<dbReference type="Proteomes" id="UP000002195">
    <property type="component" value="Chromosome 3"/>
</dbReference>
<dbReference type="GO" id="GO:0005737">
    <property type="term" value="C:cytoplasm"/>
    <property type="evidence" value="ECO:0000318"/>
    <property type="project" value="GO_Central"/>
</dbReference>
<dbReference type="GO" id="GO:0005525">
    <property type="term" value="F:GTP binding"/>
    <property type="evidence" value="ECO:0007669"/>
    <property type="project" value="UniProtKB-KW"/>
</dbReference>
<dbReference type="GO" id="GO:0003924">
    <property type="term" value="F:GTPase activity"/>
    <property type="evidence" value="ECO:0007669"/>
    <property type="project" value="InterPro"/>
</dbReference>
<dbReference type="GO" id="GO:0046872">
    <property type="term" value="F:metal ion binding"/>
    <property type="evidence" value="ECO:0007669"/>
    <property type="project" value="UniProtKB-KW"/>
</dbReference>
<dbReference type="GO" id="GO:0003743">
    <property type="term" value="F:translation initiation factor activity"/>
    <property type="evidence" value="ECO:0000250"/>
    <property type="project" value="UniProtKB"/>
</dbReference>
<dbReference type="GO" id="GO:0006446">
    <property type="term" value="P:regulation of translational initiation"/>
    <property type="evidence" value="ECO:0000250"/>
    <property type="project" value="UniProtKB"/>
</dbReference>
<dbReference type="GO" id="GO:0006413">
    <property type="term" value="P:translational initiation"/>
    <property type="evidence" value="ECO:0000250"/>
    <property type="project" value="dictyBase"/>
</dbReference>
<dbReference type="CDD" id="cd03703">
    <property type="entry name" value="aeIF5B_II"/>
    <property type="match status" value="1"/>
</dbReference>
<dbReference type="CDD" id="cd16266">
    <property type="entry name" value="IF2_aeIF5B_IV"/>
    <property type="match status" value="1"/>
</dbReference>
<dbReference type="CDD" id="cd01887">
    <property type="entry name" value="IF2_eIF5B"/>
    <property type="match status" value="1"/>
</dbReference>
<dbReference type="FunFam" id="3.40.50.10050:FF:000002">
    <property type="entry name" value="Eukaryotic translation initiation factor 5B"/>
    <property type="match status" value="1"/>
</dbReference>
<dbReference type="FunFam" id="3.40.50.300:FF:000112">
    <property type="entry name" value="Eukaryotic translation initiation factor 5B"/>
    <property type="match status" value="1"/>
</dbReference>
<dbReference type="FunFam" id="2.40.30.10:FF:000013">
    <property type="entry name" value="eukaryotic translation initiation factor 5B"/>
    <property type="match status" value="1"/>
</dbReference>
<dbReference type="FunFam" id="2.40.30.10:FF:000113">
    <property type="entry name" value="Translation initiation factor IF-2, putative"/>
    <property type="match status" value="1"/>
</dbReference>
<dbReference type="Gene3D" id="3.40.50.300">
    <property type="entry name" value="P-loop containing nucleotide triphosphate hydrolases"/>
    <property type="match status" value="1"/>
</dbReference>
<dbReference type="Gene3D" id="2.40.30.10">
    <property type="entry name" value="Translation factors"/>
    <property type="match status" value="2"/>
</dbReference>
<dbReference type="Gene3D" id="3.40.50.10050">
    <property type="entry name" value="Translation initiation factor IF- 2, domain 3"/>
    <property type="match status" value="1"/>
</dbReference>
<dbReference type="InterPro" id="IPR029459">
    <property type="entry name" value="EFTU-type"/>
</dbReference>
<dbReference type="InterPro" id="IPR027417">
    <property type="entry name" value="P-loop_NTPase"/>
</dbReference>
<dbReference type="InterPro" id="IPR005225">
    <property type="entry name" value="Small_GTP-bd"/>
</dbReference>
<dbReference type="InterPro" id="IPR000795">
    <property type="entry name" value="T_Tr_GTP-bd_dom"/>
</dbReference>
<dbReference type="InterPro" id="IPR015760">
    <property type="entry name" value="TIF_IF2"/>
</dbReference>
<dbReference type="InterPro" id="IPR023115">
    <property type="entry name" value="TIF_IF2_dom3"/>
</dbReference>
<dbReference type="InterPro" id="IPR036925">
    <property type="entry name" value="TIF_IF2_dom3_sf"/>
</dbReference>
<dbReference type="InterPro" id="IPR009000">
    <property type="entry name" value="Transl_B-barrel_sf"/>
</dbReference>
<dbReference type="NCBIfam" id="NF003078">
    <property type="entry name" value="PRK04004.1"/>
    <property type="match status" value="1"/>
</dbReference>
<dbReference type="NCBIfam" id="TIGR00231">
    <property type="entry name" value="small_GTP"/>
    <property type="match status" value="1"/>
</dbReference>
<dbReference type="PANTHER" id="PTHR43381:SF4">
    <property type="entry name" value="EUKARYOTIC TRANSLATION INITIATION FACTOR 5B"/>
    <property type="match status" value="1"/>
</dbReference>
<dbReference type="PANTHER" id="PTHR43381">
    <property type="entry name" value="TRANSLATION INITIATION FACTOR IF-2-RELATED"/>
    <property type="match status" value="1"/>
</dbReference>
<dbReference type="Pfam" id="PF00009">
    <property type="entry name" value="GTP_EFTU"/>
    <property type="match status" value="1"/>
</dbReference>
<dbReference type="Pfam" id="PF14578">
    <property type="entry name" value="GTP_EFTU_D4"/>
    <property type="match status" value="1"/>
</dbReference>
<dbReference type="Pfam" id="PF11987">
    <property type="entry name" value="IF-2"/>
    <property type="match status" value="1"/>
</dbReference>
<dbReference type="PRINTS" id="PR00315">
    <property type="entry name" value="ELONGATNFCT"/>
</dbReference>
<dbReference type="SUPFAM" id="SSF52156">
    <property type="entry name" value="Initiation factor IF2/eIF5b, domain 3"/>
    <property type="match status" value="1"/>
</dbReference>
<dbReference type="SUPFAM" id="SSF52540">
    <property type="entry name" value="P-loop containing nucleoside triphosphate hydrolases"/>
    <property type="match status" value="1"/>
</dbReference>
<dbReference type="SUPFAM" id="SSF50447">
    <property type="entry name" value="Translation proteins"/>
    <property type="match status" value="1"/>
</dbReference>
<dbReference type="PROSITE" id="PS51722">
    <property type="entry name" value="G_TR_2"/>
    <property type="match status" value="1"/>
</dbReference>
<evidence type="ECO:0000250" key="1"/>
<evidence type="ECO:0000250" key="2">
    <source>
        <dbReference type="UniProtKB" id="G0S8G9"/>
    </source>
</evidence>
<evidence type="ECO:0000250" key="3">
    <source>
        <dbReference type="UniProtKB" id="P39730"/>
    </source>
</evidence>
<evidence type="ECO:0000255" key="4">
    <source>
        <dbReference type="PROSITE-ProRule" id="PRU01059"/>
    </source>
</evidence>
<evidence type="ECO:0000256" key="5">
    <source>
        <dbReference type="SAM" id="MobiDB-lite"/>
    </source>
</evidence>
<evidence type="ECO:0000305" key="6"/>
<organism>
    <name type="scientific">Dictyostelium discoideum</name>
    <name type="common">Social amoeba</name>
    <dbReference type="NCBI Taxonomy" id="44689"/>
    <lineage>
        <taxon>Eukaryota</taxon>
        <taxon>Amoebozoa</taxon>
        <taxon>Evosea</taxon>
        <taxon>Eumycetozoa</taxon>
        <taxon>Dictyostelia</taxon>
        <taxon>Dictyosteliales</taxon>
        <taxon>Dictyosteliaceae</taxon>
        <taxon>Dictyostelium</taxon>
    </lineage>
</organism>
<accession>Q54XP6</accession>
<proteinExistence type="inferred from homology"/>
<feature type="chain" id="PRO_0000328179" description="Eukaryotic translation initiation factor 5B">
    <location>
        <begin position="1"/>
        <end position="1045"/>
    </location>
</feature>
<feature type="domain" description="tr-type G" evidence="4">
    <location>
        <begin position="458"/>
        <end position="675"/>
    </location>
</feature>
<feature type="region of interest" description="Disordered" evidence="5">
    <location>
        <begin position="1"/>
        <end position="325"/>
    </location>
</feature>
<feature type="region of interest" description="Disordered" evidence="5">
    <location>
        <begin position="339"/>
        <end position="384"/>
    </location>
</feature>
<feature type="region of interest" description="G1" evidence="4">
    <location>
        <begin position="467"/>
        <end position="474"/>
    </location>
</feature>
<feature type="region of interest" description="G2" evidence="4">
    <location>
        <begin position="492"/>
        <end position="496"/>
    </location>
</feature>
<feature type="region of interest" description="G3" evidence="4">
    <location>
        <begin position="531"/>
        <end position="534"/>
    </location>
</feature>
<feature type="region of interest" description="G4" evidence="4">
    <location>
        <begin position="585"/>
        <end position="588"/>
    </location>
</feature>
<feature type="region of interest" description="G5" evidence="4">
    <location>
        <begin position="653"/>
        <end position="655"/>
    </location>
</feature>
<feature type="compositionally biased region" description="Basic and acidic residues" evidence="5">
    <location>
        <begin position="8"/>
        <end position="27"/>
    </location>
</feature>
<feature type="compositionally biased region" description="Acidic residues" evidence="5">
    <location>
        <begin position="62"/>
        <end position="73"/>
    </location>
</feature>
<feature type="compositionally biased region" description="Low complexity" evidence="5">
    <location>
        <begin position="81"/>
        <end position="92"/>
    </location>
</feature>
<feature type="compositionally biased region" description="Acidic residues" evidence="5">
    <location>
        <begin position="105"/>
        <end position="120"/>
    </location>
</feature>
<feature type="compositionally biased region" description="Acidic residues" evidence="5">
    <location>
        <begin position="155"/>
        <end position="169"/>
    </location>
</feature>
<feature type="compositionally biased region" description="Acidic residues" evidence="5">
    <location>
        <begin position="199"/>
        <end position="212"/>
    </location>
</feature>
<feature type="compositionally biased region" description="Low complexity" evidence="5">
    <location>
        <begin position="216"/>
        <end position="241"/>
    </location>
</feature>
<feature type="compositionally biased region" description="Basic and acidic residues" evidence="5">
    <location>
        <begin position="264"/>
        <end position="325"/>
    </location>
</feature>
<feature type="compositionally biased region" description="Low complexity" evidence="5">
    <location>
        <begin position="351"/>
        <end position="361"/>
    </location>
</feature>
<feature type="compositionally biased region" description="Basic and acidic residues" evidence="5">
    <location>
        <begin position="368"/>
        <end position="384"/>
    </location>
</feature>
<feature type="binding site" evidence="1">
    <location>
        <begin position="467"/>
        <end position="474"/>
    </location>
    <ligand>
        <name>GTP</name>
        <dbReference type="ChEBI" id="CHEBI:37565"/>
    </ligand>
</feature>